<comment type="function">
    <text evidence="1">Displays ATPase and GTPase activities.</text>
</comment>
<comment type="similarity">
    <text evidence="1">Belongs to the RapZ-like family.</text>
</comment>
<feature type="chain" id="PRO_1000056870" description="Nucleotide-binding protein Tpet_1006">
    <location>
        <begin position="1"/>
        <end position="281"/>
    </location>
</feature>
<feature type="binding site" evidence="1">
    <location>
        <begin position="9"/>
        <end position="16"/>
    </location>
    <ligand>
        <name>ATP</name>
        <dbReference type="ChEBI" id="CHEBI:30616"/>
    </ligand>
</feature>
<feature type="binding site" evidence="1">
    <location>
        <begin position="58"/>
        <end position="61"/>
    </location>
    <ligand>
        <name>GTP</name>
        <dbReference type="ChEBI" id="CHEBI:37565"/>
    </ligand>
</feature>
<sequence>MKRIVVVSGLSGAGKTTAMGFLEDLGYFCVDNVPGNILEELLKLFMSSDLEKMAMAIDVRSEHLGDPISTVERIKEKTNALVIFLEASTEELLRRYALTRRRHPLQKDGLGLEDAIEKEKEILSHIKEIADVVIDTTRMNTHQLRETLAHFLVNQAGGTSVRIMSFGFKHGIPMDADFVFDARFLPNPHYVPELSSKTGLDSEVEAYFKNYPVVEEFIEKIFEVLKVAIEEYQRTGRRIITVGIGCTGGKHRSVYITHRLKEMLEREGFTVIEKHRDIEKV</sequence>
<protein>
    <recommendedName>
        <fullName evidence="1">Nucleotide-binding protein Tpet_1006</fullName>
    </recommendedName>
</protein>
<proteinExistence type="inferred from homology"/>
<accession>A5ILF1</accession>
<dbReference type="EMBL" id="CP000702">
    <property type="protein sequence ID" value="ABQ47024.1"/>
    <property type="molecule type" value="Genomic_DNA"/>
</dbReference>
<dbReference type="RefSeq" id="WP_011943560.1">
    <property type="nucleotide sequence ID" value="NC_009486.1"/>
</dbReference>
<dbReference type="SMR" id="A5ILF1"/>
<dbReference type="STRING" id="390874.Tpet_1006"/>
<dbReference type="KEGG" id="tpt:Tpet_1006"/>
<dbReference type="eggNOG" id="COG1660">
    <property type="taxonomic scope" value="Bacteria"/>
</dbReference>
<dbReference type="HOGENOM" id="CLU_059558_1_1_0"/>
<dbReference type="Proteomes" id="UP000006558">
    <property type="component" value="Chromosome"/>
</dbReference>
<dbReference type="GO" id="GO:0005524">
    <property type="term" value="F:ATP binding"/>
    <property type="evidence" value="ECO:0007669"/>
    <property type="project" value="UniProtKB-UniRule"/>
</dbReference>
<dbReference type="GO" id="GO:0005525">
    <property type="term" value="F:GTP binding"/>
    <property type="evidence" value="ECO:0007669"/>
    <property type="project" value="UniProtKB-UniRule"/>
</dbReference>
<dbReference type="Gene3D" id="3.40.50.300">
    <property type="entry name" value="P-loop containing nucleotide triphosphate hydrolases"/>
    <property type="match status" value="1"/>
</dbReference>
<dbReference type="HAMAP" id="MF_00636">
    <property type="entry name" value="RapZ_like"/>
    <property type="match status" value="1"/>
</dbReference>
<dbReference type="InterPro" id="IPR027417">
    <property type="entry name" value="P-loop_NTPase"/>
</dbReference>
<dbReference type="InterPro" id="IPR005337">
    <property type="entry name" value="RapZ-like"/>
</dbReference>
<dbReference type="InterPro" id="IPR053930">
    <property type="entry name" value="RapZ-like_N"/>
</dbReference>
<dbReference type="InterPro" id="IPR053931">
    <property type="entry name" value="RapZ_C"/>
</dbReference>
<dbReference type="NCBIfam" id="NF003828">
    <property type="entry name" value="PRK05416.1"/>
    <property type="match status" value="1"/>
</dbReference>
<dbReference type="PANTHER" id="PTHR30448">
    <property type="entry name" value="RNASE ADAPTER PROTEIN RAPZ"/>
    <property type="match status" value="1"/>
</dbReference>
<dbReference type="PANTHER" id="PTHR30448:SF0">
    <property type="entry name" value="RNASE ADAPTER PROTEIN RAPZ"/>
    <property type="match status" value="1"/>
</dbReference>
<dbReference type="Pfam" id="PF22740">
    <property type="entry name" value="PapZ_C"/>
    <property type="match status" value="1"/>
</dbReference>
<dbReference type="Pfam" id="PF03668">
    <property type="entry name" value="RapZ-like_N"/>
    <property type="match status" value="1"/>
</dbReference>
<dbReference type="PIRSF" id="PIRSF005052">
    <property type="entry name" value="P-loopkin"/>
    <property type="match status" value="1"/>
</dbReference>
<dbReference type="SUPFAM" id="SSF52540">
    <property type="entry name" value="P-loop containing nucleoside triphosphate hydrolases"/>
    <property type="match status" value="1"/>
</dbReference>
<reference key="1">
    <citation type="submission" date="2007-05" db="EMBL/GenBank/DDBJ databases">
        <title>Complete sequence of Thermotoga petrophila RKU-1.</title>
        <authorList>
            <consortium name="US DOE Joint Genome Institute"/>
            <person name="Copeland A."/>
            <person name="Lucas S."/>
            <person name="Lapidus A."/>
            <person name="Barry K."/>
            <person name="Glavina del Rio T."/>
            <person name="Dalin E."/>
            <person name="Tice H."/>
            <person name="Pitluck S."/>
            <person name="Sims D."/>
            <person name="Brettin T."/>
            <person name="Bruce D."/>
            <person name="Detter J.C."/>
            <person name="Han C."/>
            <person name="Tapia R."/>
            <person name="Schmutz J."/>
            <person name="Larimer F."/>
            <person name="Land M."/>
            <person name="Hauser L."/>
            <person name="Kyrpides N."/>
            <person name="Mikhailova N."/>
            <person name="Nelson K."/>
            <person name="Gogarten J.P."/>
            <person name="Noll K."/>
            <person name="Richardson P."/>
        </authorList>
    </citation>
    <scope>NUCLEOTIDE SEQUENCE [LARGE SCALE GENOMIC DNA]</scope>
    <source>
        <strain>ATCC BAA-488 / DSM 13995 / JCM 10881 / RKU-1</strain>
    </source>
</reference>
<name>Y1006_THEP1</name>
<organism>
    <name type="scientific">Thermotoga petrophila (strain ATCC BAA-488 / DSM 13995 / JCM 10881 / RKU-1)</name>
    <dbReference type="NCBI Taxonomy" id="390874"/>
    <lineage>
        <taxon>Bacteria</taxon>
        <taxon>Thermotogati</taxon>
        <taxon>Thermotogota</taxon>
        <taxon>Thermotogae</taxon>
        <taxon>Thermotogales</taxon>
        <taxon>Thermotogaceae</taxon>
        <taxon>Thermotoga</taxon>
    </lineage>
</organism>
<keyword id="KW-0067">ATP-binding</keyword>
<keyword id="KW-0342">GTP-binding</keyword>
<keyword id="KW-0547">Nucleotide-binding</keyword>
<evidence type="ECO:0000255" key="1">
    <source>
        <dbReference type="HAMAP-Rule" id="MF_00636"/>
    </source>
</evidence>
<gene>
    <name type="ordered locus">Tpet_1006</name>
</gene>